<feature type="chain" id="PRO_0000450827" description="Phomopsene synthase">
    <location>
        <begin position="1"/>
        <end position="728"/>
    </location>
</feature>
<feature type="repeat" description="1" evidence="10">
    <location>
        <begin position="381"/>
        <end position="386"/>
    </location>
</feature>
<feature type="repeat" description="2" evidence="10">
    <location>
        <begin position="387"/>
        <end position="392"/>
    </location>
</feature>
<feature type="repeat" description="3" evidence="10">
    <location>
        <begin position="393"/>
        <end position="398"/>
    </location>
</feature>
<feature type="region of interest" description="Terpene cyclase" evidence="6 7">
    <location>
        <begin position="1"/>
        <end position="327"/>
    </location>
</feature>
<feature type="region of interest" description="Prenyltransferase" evidence="6 7">
    <location>
        <begin position="328"/>
        <end position="728"/>
    </location>
</feature>
<feature type="region of interest" description="Disordered" evidence="5">
    <location>
        <begin position="352"/>
        <end position="379"/>
    </location>
</feature>
<feature type="region of interest" description="3 X 6 AA approximate tandem repeats" evidence="10">
    <location>
        <begin position="381"/>
        <end position="398"/>
    </location>
</feature>
<feature type="short sequence motif" description="DDXXD 1" evidence="6">
    <location>
        <begin position="94"/>
        <end position="98"/>
    </location>
</feature>
<feature type="short sequence motif" description="NSE/DTE" evidence="11">
    <location>
        <begin position="226"/>
        <end position="234"/>
    </location>
</feature>
<feature type="short sequence motif" description="DDXXD 2" evidence="6">
    <location>
        <begin position="486"/>
        <end position="490"/>
    </location>
</feature>
<feature type="compositionally biased region" description="Basic and acidic residues" evidence="5">
    <location>
        <begin position="352"/>
        <end position="363"/>
    </location>
</feature>
<feature type="binding site" evidence="4">
    <location>
        <position position="94"/>
    </location>
    <ligand>
        <name>Mg(2+)</name>
        <dbReference type="ChEBI" id="CHEBI:18420"/>
        <label>1</label>
    </ligand>
</feature>
<feature type="binding site" evidence="4">
    <location>
        <position position="94"/>
    </location>
    <ligand>
        <name>Mg(2+)</name>
        <dbReference type="ChEBI" id="CHEBI:18420"/>
        <label>2</label>
    </ligand>
</feature>
<feature type="binding site" evidence="1">
    <location>
        <position position="94"/>
    </location>
    <ligand>
        <name>substrate</name>
    </ligand>
</feature>
<feature type="binding site" evidence="4">
    <location>
        <position position="98"/>
    </location>
    <ligand>
        <name>Mg(2+)</name>
        <dbReference type="ChEBI" id="CHEBI:18420"/>
        <label>1</label>
    </ligand>
</feature>
<feature type="binding site" evidence="4">
    <location>
        <position position="98"/>
    </location>
    <ligand>
        <name>Mg(2+)</name>
        <dbReference type="ChEBI" id="CHEBI:18420"/>
        <label>2</label>
    </ligand>
</feature>
<feature type="binding site" evidence="1">
    <location>
        <position position="98"/>
    </location>
    <ligand>
        <name>substrate</name>
    </ligand>
</feature>
<feature type="binding site" evidence="1">
    <location>
        <begin position="181"/>
        <end position="184"/>
    </location>
    <ligand>
        <name>substrate</name>
    </ligand>
</feature>
<feature type="binding site" evidence="1">
    <location>
        <position position="226"/>
    </location>
    <ligand>
        <name>substrate</name>
    </ligand>
</feature>
<feature type="binding site" evidence="1">
    <location>
        <begin position="230"/>
        <end position="234"/>
    </location>
    <ligand>
        <name>substrate</name>
    </ligand>
</feature>
<feature type="binding site" evidence="1">
    <location>
        <begin position="319"/>
        <end position="320"/>
    </location>
    <ligand>
        <name>substrate</name>
    </ligand>
</feature>
<feature type="binding site" evidence="3">
    <location>
        <position position="447"/>
    </location>
    <ligand>
        <name>isopentenyl diphosphate</name>
        <dbReference type="ChEBI" id="CHEBI:128769"/>
    </ligand>
</feature>
<feature type="binding site" evidence="3">
    <location>
        <position position="450"/>
    </location>
    <ligand>
        <name>isopentenyl diphosphate</name>
        <dbReference type="ChEBI" id="CHEBI:128769"/>
    </ligand>
</feature>
<feature type="binding site" evidence="3">
    <location>
        <position position="479"/>
    </location>
    <ligand>
        <name>isopentenyl diphosphate</name>
        <dbReference type="ChEBI" id="CHEBI:128769"/>
    </ligand>
</feature>
<feature type="binding site" evidence="3">
    <location>
        <position position="486"/>
    </location>
    <ligand>
        <name>Mg(2+)</name>
        <dbReference type="ChEBI" id="CHEBI:18420"/>
        <label>3</label>
    </ligand>
</feature>
<feature type="binding site" evidence="3">
    <location>
        <position position="486"/>
    </location>
    <ligand>
        <name>Mg(2+)</name>
        <dbReference type="ChEBI" id="CHEBI:18420"/>
        <label>4</label>
    </ligand>
</feature>
<feature type="binding site" evidence="3">
    <location>
        <position position="490"/>
    </location>
    <ligand>
        <name>Mg(2+)</name>
        <dbReference type="ChEBI" id="CHEBI:18420"/>
        <label>3</label>
    </ligand>
</feature>
<feature type="binding site" evidence="3">
    <location>
        <position position="490"/>
    </location>
    <ligand>
        <name>Mg(2+)</name>
        <dbReference type="ChEBI" id="CHEBI:18420"/>
        <label>4</label>
    </ligand>
</feature>
<feature type="binding site" evidence="3">
    <location>
        <position position="495"/>
    </location>
    <ligand>
        <name>dimethylallyl diphosphate</name>
        <dbReference type="ChEBI" id="CHEBI:57623"/>
    </ligand>
</feature>
<feature type="binding site" evidence="3">
    <location>
        <position position="496"/>
    </location>
    <ligand>
        <name>isopentenyl diphosphate</name>
        <dbReference type="ChEBI" id="CHEBI:128769"/>
    </ligand>
</feature>
<feature type="binding site" evidence="3">
    <location>
        <position position="574"/>
    </location>
    <ligand>
        <name>dimethylallyl diphosphate</name>
        <dbReference type="ChEBI" id="CHEBI:57623"/>
    </ligand>
</feature>
<feature type="binding site" evidence="3">
    <location>
        <position position="575"/>
    </location>
    <ligand>
        <name>dimethylallyl diphosphate</name>
        <dbReference type="ChEBI" id="CHEBI:57623"/>
    </ligand>
</feature>
<feature type="binding site" evidence="3">
    <location>
        <position position="610"/>
    </location>
    <ligand>
        <name>dimethylallyl diphosphate</name>
        <dbReference type="ChEBI" id="CHEBI:57623"/>
    </ligand>
</feature>
<feature type="binding site" evidence="3">
    <location>
        <position position="617"/>
    </location>
    <ligand>
        <name>dimethylallyl diphosphate</name>
        <dbReference type="ChEBI" id="CHEBI:57623"/>
    </ligand>
</feature>
<feature type="binding site" evidence="3">
    <location>
        <position position="627"/>
    </location>
    <ligand>
        <name>dimethylallyl diphosphate</name>
        <dbReference type="ChEBI" id="CHEBI:57623"/>
    </ligand>
</feature>
<feature type="binding site" evidence="3">
    <location>
        <position position="637"/>
    </location>
    <ligand>
        <name>dimethylallyl diphosphate</name>
        <dbReference type="ChEBI" id="CHEBI:57623"/>
    </ligand>
</feature>
<sequence>MEYRYSYVIDPSSYDNQGLCNGIPLRVHRNADIEEYATISLRNDWRKHVGPLPLTSYGGNLGPKYNFTAVTLPECRPDRLEIVSYIMEFAFLHDDLVDTAQVDEALALNDTWRDGITEGLDTTSAKGKKSGEGLILRNILKEVTAIDPVRAAELMKFWKRDLDVSRDRKHFRDFDDYMEYRIVDCASYFLIALSTFAMALTIPAEDKDEVFTLLTRPVWAAAALTNDVQSWEKEDKLFQKDNATDMTNGVWMLMKQYSIGVEEAKRRILGKAREHVAEFVKTLSQIHNRLDLSLDSRLFVEAMQYMISGNLMWGISTPRYHSDQSLDEMMVARMKYGWPNHREVTKLTSDLENRGTKRTHQDDTEGVQSVKRFNGASTKNGINGTNGINGLNGINGSNGVKIKRHKNKEYSGALTKDSDLVLNMDLNGLSSAIICAPADYIGSLPSKGIRDNVADALSIWLDVPAKELNQIKRAINLLHNASLMLDDVQDGSVLRRAQPTTHTVFGPAQTINSAGHQIIQAMNEIRKLGSDDCLDIFSEELEKLYVGQSHDLYWVYNDSCSPTIEDYFKMVDYKTGGLFNMLARLMTAKSSSSSSPDLTALVGLLGRYFQIRDDYMNLTSADYTVEKGFCEDLDEGKFSITLLHALSAAPEPEALLLRNLMSGRRNDGKLSVVQKNLALSIIEGARSLEYTAAVLQKLYKAIVRELESTERQFGENKPFRFLLSLLKV</sequence>
<name>PAPS_PHOAM</name>
<dbReference type="EC" id="4.2.3.-" evidence="6 7"/>
<dbReference type="EC" id="2.5.1.29" evidence="6 7"/>
<dbReference type="SMR" id="P9WEV6"/>
<dbReference type="UniPathway" id="UPA00213"/>
<dbReference type="GO" id="GO:0004311">
    <property type="term" value="F:geranylgeranyl diphosphate synthase activity"/>
    <property type="evidence" value="ECO:0007669"/>
    <property type="project" value="UniProtKB-EC"/>
</dbReference>
<dbReference type="GO" id="GO:0016829">
    <property type="term" value="F:lyase activity"/>
    <property type="evidence" value="ECO:0007669"/>
    <property type="project" value="UniProtKB-KW"/>
</dbReference>
<dbReference type="GO" id="GO:0046872">
    <property type="term" value="F:metal ion binding"/>
    <property type="evidence" value="ECO:0007669"/>
    <property type="project" value="UniProtKB-KW"/>
</dbReference>
<dbReference type="GO" id="GO:0046165">
    <property type="term" value="P:alcohol biosynthetic process"/>
    <property type="evidence" value="ECO:0007669"/>
    <property type="project" value="UniProtKB-ARBA"/>
</dbReference>
<dbReference type="GO" id="GO:0043386">
    <property type="term" value="P:mycotoxin biosynthetic process"/>
    <property type="evidence" value="ECO:0007669"/>
    <property type="project" value="UniProtKB-ARBA"/>
</dbReference>
<dbReference type="GO" id="GO:0016114">
    <property type="term" value="P:terpenoid biosynthetic process"/>
    <property type="evidence" value="ECO:0007669"/>
    <property type="project" value="UniProtKB-UniPathway"/>
</dbReference>
<dbReference type="Gene3D" id="1.10.600.10">
    <property type="entry name" value="Farnesyl Diphosphate Synthase"/>
    <property type="match status" value="2"/>
</dbReference>
<dbReference type="InterPro" id="IPR008949">
    <property type="entry name" value="Isoprenoid_synthase_dom_sf"/>
</dbReference>
<dbReference type="InterPro" id="IPR000092">
    <property type="entry name" value="Polyprenyl_synt"/>
</dbReference>
<dbReference type="InterPro" id="IPR033749">
    <property type="entry name" value="Polyprenyl_synt_CS"/>
</dbReference>
<dbReference type="PANTHER" id="PTHR12001">
    <property type="entry name" value="GERANYLGERANYL PYROPHOSPHATE SYNTHASE"/>
    <property type="match status" value="1"/>
</dbReference>
<dbReference type="PANTHER" id="PTHR12001:SF72">
    <property type="entry name" value="THIJ_PFPI FAMILY PROTEIN (AFU_ORTHOLOGUE AFUA_3G01210)-RELATED"/>
    <property type="match status" value="1"/>
</dbReference>
<dbReference type="Pfam" id="PF00348">
    <property type="entry name" value="polyprenyl_synt"/>
    <property type="match status" value="1"/>
</dbReference>
<dbReference type="Pfam" id="PF19086">
    <property type="entry name" value="Terpene_syn_C_2"/>
    <property type="match status" value="1"/>
</dbReference>
<dbReference type="SFLD" id="SFLDS00005">
    <property type="entry name" value="Isoprenoid_Synthase_Type_I"/>
    <property type="match status" value="1"/>
</dbReference>
<dbReference type="SUPFAM" id="SSF48576">
    <property type="entry name" value="Terpenoid synthases"/>
    <property type="match status" value="2"/>
</dbReference>
<dbReference type="PROSITE" id="PS00723">
    <property type="entry name" value="POLYPRENYL_SYNTHASE_1"/>
    <property type="match status" value="1"/>
</dbReference>
<dbReference type="PROSITE" id="PS00444">
    <property type="entry name" value="POLYPRENYL_SYNTHASE_2"/>
    <property type="match status" value="1"/>
</dbReference>
<organism>
    <name type="scientific">Phomopsis amygdali</name>
    <name type="common">Fusicoccum amygdali</name>
    <dbReference type="NCBI Taxonomy" id="1214568"/>
    <lineage>
        <taxon>Eukaryota</taxon>
        <taxon>Fungi</taxon>
        <taxon>Dikarya</taxon>
        <taxon>Ascomycota</taxon>
        <taxon>Pezizomycotina</taxon>
        <taxon>Sordariomycetes</taxon>
        <taxon>Sordariomycetidae</taxon>
        <taxon>Diaporthales</taxon>
        <taxon>Diaporthaceae</taxon>
        <taxon>Diaporthe</taxon>
    </lineage>
</organism>
<proteinExistence type="evidence at protein level"/>
<protein>
    <recommendedName>
        <fullName evidence="8">Phomopsene synthase</fullName>
        <shortName evidence="8">PS</shortName>
    </recommendedName>
    <domain>
        <recommendedName>
            <fullName evidence="8">Terpene cyclase</fullName>
            <ecNumber evidence="6 7">4.2.3.-</ecNumber>
        </recommendedName>
    </domain>
    <domain>
        <recommendedName>
            <fullName evidence="8">Geranylgeranyl diphosphate synthase</fullName>
            <shortName evidence="8">GGDP synthase</shortName>
            <shortName evidence="8">GGS</shortName>
            <ecNumber evidence="6 7">2.5.1.29</ecNumber>
        </recommendedName>
        <alternativeName>
            <fullName evidence="9">Methyl phomopsenonate biosynthesis cluster protein PaPS</fullName>
        </alternativeName>
    </domain>
</protein>
<gene>
    <name evidence="8" type="primary">PaPS</name>
</gene>
<evidence type="ECO:0000250" key="1">
    <source>
        <dbReference type="UniProtKB" id="A2PZA5"/>
    </source>
</evidence>
<evidence type="ECO:0000250" key="2">
    <source>
        <dbReference type="UniProtKB" id="P9WEV7"/>
    </source>
</evidence>
<evidence type="ECO:0000250" key="3">
    <source>
        <dbReference type="UniProtKB" id="Q12051"/>
    </source>
</evidence>
<evidence type="ECO:0000250" key="4">
    <source>
        <dbReference type="UniProtKB" id="Q40577"/>
    </source>
</evidence>
<evidence type="ECO:0000256" key="5">
    <source>
        <dbReference type="SAM" id="MobiDB-lite"/>
    </source>
</evidence>
<evidence type="ECO:0000269" key="6">
    <source>
    </source>
</evidence>
<evidence type="ECO:0000269" key="7">
    <source>
    </source>
</evidence>
<evidence type="ECO:0000303" key="8">
    <source>
    </source>
</evidence>
<evidence type="ECO:0000303" key="9">
    <source>
    </source>
</evidence>
<evidence type="ECO:0000305" key="10"/>
<evidence type="ECO:0000305" key="11">
    <source>
    </source>
</evidence>
<accession>P9WEV6</accession>
<keyword id="KW-0414">Isoprene biosynthesis</keyword>
<keyword id="KW-0456">Lyase</keyword>
<keyword id="KW-0460">Magnesium</keyword>
<keyword id="KW-0479">Metal-binding</keyword>
<keyword id="KW-0511">Multifunctional enzyme</keyword>
<keyword id="KW-0677">Repeat</keyword>
<keyword id="KW-0808">Transferase</keyword>
<comment type="function">
    <text evidence="6 7 11">Bifunctional terpene synthase; part of the gene cluster that mediates the biosynthesis of the diterpene methyl phomopsenonate (PubMed:19161275, PubMed:28270685). At first, the universal precursor of diterpene, geranylgeranyl diphosphate (GGPP) is provided and is cyclized by the unusual bifunctional terpene synthase PaPS to give phomopsene (PubMed:19161275, PubMed:28270685). The C-terminal prenyltransferase domain of PaPS catalyzes formation of GGPP, whereas the N-terminal terpene cyclase domain catalyzes the cyclization of GGPP to phomopsene (PubMed:19161275, PubMed:28270685). Since the oxidation of a methylgroup to a carboxyl group is frequently catalyzed by a cytochrome P450 monooxygenase, the C-16 methyl group would be oxidized by the cluster-specific cytochrome P450 monooxygenase ORF3 (Probable). Subsequently, oxidation of the allylic position and methylation of the carboxyl group may give methyl phomopsenonate (Probable). Although further study is necessary to identify genes such as a monooxygenase and a methyltransferase, the predicted functions of genes on the cluster are correlated with the structure of methyl phomopsenonate (Probable).</text>
</comment>
<comment type="catalytic activity">
    <reaction evidence="6 7">
        <text>isopentenyl diphosphate + (2E,6E)-farnesyl diphosphate = (2E,6E,10E)-geranylgeranyl diphosphate + diphosphate</text>
        <dbReference type="Rhea" id="RHEA:17653"/>
        <dbReference type="ChEBI" id="CHEBI:33019"/>
        <dbReference type="ChEBI" id="CHEBI:58756"/>
        <dbReference type="ChEBI" id="CHEBI:128769"/>
        <dbReference type="ChEBI" id="CHEBI:175763"/>
        <dbReference type="EC" id="2.5.1.29"/>
    </reaction>
</comment>
<comment type="cofactor">
    <cofactor evidence="2">
        <name>Mg(2+)</name>
        <dbReference type="ChEBI" id="CHEBI:18420"/>
    </cofactor>
</comment>
<comment type="pathway">
    <text evidence="7">Secondary metabolite biosynthesis; terpenoid biosynthesis.</text>
</comment>
<comment type="subunit">
    <text evidence="1">Hexamer.</text>
</comment>
<comment type="domain">
    <text evidence="11">The conserved DDXXD motifs as well as the NSE/DTE motif are important for the catalytic activity, presumably through binding to Mg(2+).</text>
</comment>
<comment type="similarity">
    <text evidence="10">In the N-terminal section; belongs to the terpene synthase family.</text>
</comment>
<comment type="similarity">
    <text evidence="10">In the C-terminal section; belongs to the FPP/GGPP synthase family.</text>
</comment>
<reference key="1">
    <citation type="journal article" date="2009" name="J. Org. Chem.">
        <title>Biosynthetic gene-based secondary metabolite screening: a new diterpene, methyl phomopsenonate, from the fungus Phomopsis amygdali.</title>
        <authorList>
            <person name="Toyomasu T."/>
            <person name="Kaneko A."/>
            <person name="Tokiwano T."/>
            <person name="Kanno Y."/>
            <person name="Kanno Y."/>
            <person name="Niida R."/>
            <person name="Miura S."/>
            <person name="Nishioka T."/>
            <person name="Ikeda C."/>
            <person name="Mitsuhashi W."/>
            <person name="Dairi T."/>
            <person name="Kawano T."/>
            <person name="Oikawa H."/>
            <person name="Kato N."/>
            <person name="Sassa T."/>
        </authorList>
    </citation>
    <scope>NUCLEOTIDE SEQUENCE [MRNA]</scope>
    <scope>FUNCTION</scope>
    <scope>CATALYTIC ACTIVITY</scope>
    <scope>DOMAIN</scope>
    <scope>PATHWAY</scope>
</reference>
<reference key="2">
    <citation type="journal article" date="2017" name="J. Antibiot.">
        <title>Cyclization mechanism of phomopsene synthase: mass spectrometry based analysis of various site-specifically labeled terpenes.</title>
        <authorList>
            <person name="Shinde S.S."/>
            <person name="Minami A."/>
            <person name="Chen Z."/>
            <person name="Tokiwano T."/>
            <person name="Toyomasu T."/>
            <person name="Kato N."/>
            <person name="Sassa T."/>
            <person name="Oikawa H."/>
        </authorList>
    </citation>
    <scope>FUNCTION</scope>
    <scope>CATALYTIC ACTIVITY</scope>
</reference>